<gene>
    <name evidence="1" type="primary">rpmC</name>
    <name type="ordered locus">BURPS1106A_3796</name>
</gene>
<comment type="similarity">
    <text evidence="1">Belongs to the universal ribosomal protein uL29 family.</text>
</comment>
<reference key="1">
    <citation type="journal article" date="2010" name="Genome Biol. Evol.">
        <title>Continuing evolution of Burkholderia mallei through genome reduction and large-scale rearrangements.</title>
        <authorList>
            <person name="Losada L."/>
            <person name="Ronning C.M."/>
            <person name="DeShazer D."/>
            <person name="Woods D."/>
            <person name="Fedorova N."/>
            <person name="Kim H.S."/>
            <person name="Shabalina S.A."/>
            <person name="Pearson T.R."/>
            <person name="Brinkac L."/>
            <person name="Tan P."/>
            <person name="Nandi T."/>
            <person name="Crabtree J."/>
            <person name="Badger J."/>
            <person name="Beckstrom-Sternberg S."/>
            <person name="Saqib M."/>
            <person name="Schutzer S.E."/>
            <person name="Keim P."/>
            <person name="Nierman W.C."/>
        </authorList>
    </citation>
    <scope>NUCLEOTIDE SEQUENCE [LARGE SCALE GENOMIC DNA]</scope>
    <source>
        <strain>1106a</strain>
    </source>
</reference>
<protein>
    <recommendedName>
        <fullName evidence="1">Large ribosomal subunit protein uL29</fullName>
    </recommendedName>
    <alternativeName>
        <fullName evidence="2">50S ribosomal protein L29</fullName>
    </alternativeName>
</protein>
<sequence length="64" mass="7310">MKASELLQKDQAALNKELSDLLKAQFGLRMQLATQQLTNTSQLKKVRRDIARVRTVLTQKANQK</sequence>
<dbReference type="EMBL" id="CP000572">
    <property type="protein sequence ID" value="ABN90335.1"/>
    <property type="molecule type" value="Genomic_DNA"/>
</dbReference>
<dbReference type="RefSeq" id="WP_004199856.1">
    <property type="nucleotide sequence ID" value="NC_009076.1"/>
</dbReference>
<dbReference type="SMR" id="A3P0A5"/>
<dbReference type="GeneID" id="93061824"/>
<dbReference type="KEGG" id="bpl:BURPS1106A_3796"/>
<dbReference type="HOGENOM" id="CLU_158491_1_1_4"/>
<dbReference type="Proteomes" id="UP000006738">
    <property type="component" value="Chromosome I"/>
</dbReference>
<dbReference type="GO" id="GO:0022625">
    <property type="term" value="C:cytosolic large ribosomal subunit"/>
    <property type="evidence" value="ECO:0007669"/>
    <property type="project" value="TreeGrafter"/>
</dbReference>
<dbReference type="GO" id="GO:0003735">
    <property type="term" value="F:structural constituent of ribosome"/>
    <property type="evidence" value="ECO:0007669"/>
    <property type="project" value="InterPro"/>
</dbReference>
<dbReference type="GO" id="GO:0006412">
    <property type="term" value="P:translation"/>
    <property type="evidence" value="ECO:0007669"/>
    <property type="project" value="UniProtKB-UniRule"/>
</dbReference>
<dbReference type="CDD" id="cd00427">
    <property type="entry name" value="Ribosomal_L29_HIP"/>
    <property type="match status" value="1"/>
</dbReference>
<dbReference type="Gene3D" id="6.10.140.1970">
    <property type="match status" value="1"/>
</dbReference>
<dbReference type="HAMAP" id="MF_00374">
    <property type="entry name" value="Ribosomal_uL29"/>
    <property type="match status" value="1"/>
</dbReference>
<dbReference type="InterPro" id="IPR050063">
    <property type="entry name" value="Ribosomal_protein_uL29"/>
</dbReference>
<dbReference type="InterPro" id="IPR001854">
    <property type="entry name" value="Ribosomal_uL29"/>
</dbReference>
<dbReference type="InterPro" id="IPR018254">
    <property type="entry name" value="Ribosomal_uL29_CS"/>
</dbReference>
<dbReference type="InterPro" id="IPR036049">
    <property type="entry name" value="Ribosomal_uL29_sf"/>
</dbReference>
<dbReference type="NCBIfam" id="TIGR00012">
    <property type="entry name" value="L29"/>
    <property type="match status" value="1"/>
</dbReference>
<dbReference type="PANTHER" id="PTHR10916">
    <property type="entry name" value="60S RIBOSOMAL PROTEIN L35/50S RIBOSOMAL PROTEIN L29"/>
    <property type="match status" value="1"/>
</dbReference>
<dbReference type="PANTHER" id="PTHR10916:SF0">
    <property type="entry name" value="LARGE RIBOSOMAL SUBUNIT PROTEIN UL29C"/>
    <property type="match status" value="1"/>
</dbReference>
<dbReference type="Pfam" id="PF00831">
    <property type="entry name" value="Ribosomal_L29"/>
    <property type="match status" value="1"/>
</dbReference>
<dbReference type="SUPFAM" id="SSF46561">
    <property type="entry name" value="Ribosomal protein L29 (L29p)"/>
    <property type="match status" value="1"/>
</dbReference>
<dbReference type="PROSITE" id="PS00579">
    <property type="entry name" value="RIBOSOMAL_L29"/>
    <property type="match status" value="1"/>
</dbReference>
<name>RL29_BURP0</name>
<accession>A3P0A5</accession>
<organism>
    <name type="scientific">Burkholderia pseudomallei (strain 1106a)</name>
    <dbReference type="NCBI Taxonomy" id="357348"/>
    <lineage>
        <taxon>Bacteria</taxon>
        <taxon>Pseudomonadati</taxon>
        <taxon>Pseudomonadota</taxon>
        <taxon>Betaproteobacteria</taxon>
        <taxon>Burkholderiales</taxon>
        <taxon>Burkholderiaceae</taxon>
        <taxon>Burkholderia</taxon>
        <taxon>pseudomallei group</taxon>
    </lineage>
</organism>
<feature type="chain" id="PRO_1000007439" description="Large ribosomal subunit protein uL29">
    <location>
        <begin position="1"/>
        <end position="64"/>
    </location>
</feature>
<keyword id="KW-0687">Ribonucleoprotein</keyword>
<keyword id="KW-0689">Ribosomal protein</keyword>
<evidence type="ECO:0000255" key="1">
    <source>
        <dbReference type="HAMAP-Rule" id="MF_00374"/>
    </source>
</evidence>
<evidence type="ECO:0000305" key="2"/>
<proteinExistence type="inferred from homology"/>